<accession>C0HLY4</accession>
<organism>
    <name type="scientific">Rana latastei</name>
    <name type="common">Italian agile frog</name>
    <dbReference type="NCBI Taxonomy" id="151453"/>
    <lineage>
        <taxon>Eukaryota</taxon>
        <taxon>Metazoa</taxon>
        <taxon>Chordata</taxon>
        <taxon>Craniata</taxon>
        <taxon>Vertebrata</taxon>
        <taxon>Euteleostomi</taxon>
        <taxon>Amphibia</taxon>
        <taxon>Batrachia</taxon>
        <taxon>Anura</taxon>
        <taxon>Neobatrachia</taxon>
        <taxon>Ranoidea</taxon>
        <taxon>Ranidae</taxon>
        <taxon>Rana</taxon>
        <taxon>Rana</taxon>
    </lineage>
</organism>
<evidence type="ECO:0000250" key="1">
    <source>
        <dbReference type="UniProtKB" id="C5H0E0"/>
    </source>
</evidence>
<evidence type="ECO:0000269" key="2">
    <source>
    </source>
</evidence>
<evidence type="ECO:0000303" key="3">
    <source>
    </source>
</evidence>
<evidence type="ECO:0000305" key="4"/>
<evidence type="ECO:0000305" key="5">
    <source>
    </source>
</evidence>
<comment type="function">
    <text evidence="1">Antimicrobial peptide.</text>
</comment>
<comment type="subcellular location">
    <subcellularLocation>
        <location evidence="2">Secreted</location>
    </subcellularLocation>
</comment>
<comment type="tissue specificity">
    <text evidence="5">Expressed by the skin glands.</text>
</comment>
<comment type="mass spectrometry" mass="1465.93" method="Electrospray" evidence="2"/>
<comment type="similarity">
    <text evidence="4">Belongs to the frog skin active peptide (FSAP) family. Temporin subfamily.</text>
</comment>
<dbReference type="GO" id="GO:0005576">
    <property type="term" value="C:extracellular region"/>
    <property type="evidence" value="ECO:0007669"/>
    <property type="project" value="UniProtKB-SubCell"/>
</dbReference>
<dbReference type="GO" id="GO:0042742">
    <property type="term" value="P:defense response to bacterium"/>
    <property type="evidence" value="ECO:0007669"/>
    <property type="project" value="UniProtKB-KW"/>
</dbReference>
<feature type="chain" id="PRO_0000454224" description="Temporin-1LTa">
    <location>
        <begin position="1"/>
        <end position="14"/>
    </location>
</feature>
<feature type="modified residue" description="Leucine amide" evidence="2">
    <location>
        <position position="14"/>
    </location>
</feature>
<feature type="unsure residue" description="Assigned by comparison with orthologs" evidence="5">
    <location>
        <position position="1"/>
    </location>
</feature>
<feature type="unsure residue" description="Assigned by comparison with orthologs" evidence="5">
    <location>
        <position position="4"/>
    </location>
</feature>
<feature type="unsure residue" description="Assigned by comparison with orthologs" evidence="5">
    <location>
        <position position="7"/>
    </location>
</feature>
<feature type="unsure residue" description="Assigned by comparison with orthologs" evidence="5">
    <location>
        <position position="8"/>
    </location>
</feature>
<feature type="unsure residue" description="Assigned by comparison with orthologs" evidence="5">
    <location>
        <position position="9"/>
    </location>
</feature>
<feature type="unsure residue" description="Assigned by comparison with orthologs" evidence="5">
    <location>
        <position position="11"/>
    </location>
</feature>
<feature type="unsure residue" description="Assigned by comparison with orthologs" evidence="5">
    <location>
        <position position="14"/>
    </location>
</feature>
<feature type="non-terminal residue" evidence="2">
    <location>
        <position position="14"/>
    </location>
</feature>
<reference evidence="4" key="1">
    <citation type="journal article" date="2016" name="Rapid Commun. Mass Spectrom.">
        <title>LTQ Orbitrap Velos in routine de novo sequencing of non-tryptic skin peptides from the frog Rana latastei with traditional and reliable manual spectra interpretation.</title>
        <authorList>
            <person name="Samgina T.Y."/>
            <person name="Tolpina M.D."/>
            <person name="Trebse P."/>
            <person name="Torkar G."/>
            <person name="Artemenko K.A."/>
            <person name="Bergquist J."/>
            <person name="Lebedev A.T."/>
        </authorList>
    </citation>
    <scope>PROTEIN SEQUENCE</scope>
    <scope>IDENTIFICATION BY MASS SPECTROMETRY</scope>
    <scope>SUBCELLULAR LOCATION</scope>
    <scope>TISSUE SPECIFICITY</scope>
    <scope>AMIDATION AT LEU-14</scope>
</reference>
<name>TP1A_RANLT</name>
<sequence length="14" mass="1467">LGALTQLLLNLGKL</sequence>
<keyword id="KW-0027">Amidation</keyword>
<keyword id="KW-0878">Amphibian defense peptide</keyword>
<keyword id="KW-0044">Antibiotic</keyword>
<keyword id="KW-0929">Antimicrobial</keyword>
<keyword id="KW-0903">Direct protein sequencing</keyword>
<keyword id="KW-0964">Secreted</keyword>
<protein>
    <recommendedName>
        <fullName evidence="3">Temporin-1LTa</fullName>
    </recommendedName>
</protein>
<proteinExistence type="evidence at protein level"/>